<accession>P9WM49</accession>
<accession>L0T651</accession>
<accession>P64789</accession>
<accession>Q11054</accession>
<dbReference type="EMBL" id="AL123456">
    <property type="protein sequence ID" value="CCP44021.1"/>
    <property type="molecule type" value="Genomic_DNA"/>
</dbReference>
<dbReference type="PIR" id="A70754">
    <property type="entry name" value="A70754"/>
</dbReference>
<dbReference type="RefSeq" id="NP_215781.1">
    <property type="nucleotide sequence ID" value="NC_000962.3"/>
</dbReference>
<dbReference type="SMR" id="P9WM49"/>
<dbReference type="STRING" id="83332.Rv1265"/>
<dbReference type="PaxDb" id="83332-Rv1265"/>
<dbReference type="DNASU" id="887058"/>
<dbReference type="GeneID" id="887058"/>
<dbReference type="KEGG" id="mtu:Rv1265"/>
<dbReference type="KEGG" id="mtv:RVBD_1265"/>
<dbReference type="PATRIC" id="fig|83332.111.peg.1412"/>
<dbReference type="TubercuList" id="Rv1265"/>
<dbReference type="eggNOG" id="ENOG502ZAHT">
    <property type="taxonomic scope" value="Bacteria"/>
</dbReference>
<dbReference type="InParanoid" id="P9WM49"/>
<dbReference type="OrthoDB" id="3290566at2"/>
<dbReference type="Proteomes" id="UP000001584">
    <property type="component" value="Chromosome"/>
</dbReference>
<dbReference type="GO" id="GO:0009274">
    <property type="term" value="C:peptidoglycan-based cell wall"/>
    <property type="evidence" value="ECO:0007005"/>
    <property type="project" value="MTBBASE"/>
</dbReference>
<dbReference type="GO" id="GO:0005886">
    <property type="term" value="C:plasma membrane"/>
    <property type="evidence" value="ECO:0007005"/>
    <property type="project" value="MTBBASE"/>
</dbReference>
<name>Y1265_MYCTU</name>
<protein>
    <recommendedName>
        <fullName>Uncharacterized protein Rv1265</fullName>
    </recommendedName>
</protein>
<proteinExistence type="evidence at protein level"/>
<keyword id="KW-1185">Reference proteome</keyword>
<sequence length="226" mass="25230">MVLARPDAVFAPARNRCHVSLPVNAMSLKMKVCNHVIMRHHHMHGRRYGRPGGWQQAQQPDASGAAEWFAGRLPEDWFDGDPTVIVDREEITVIGKLPGLESPEEESAARASGRVSRFRDETRPERMTIADEAQNRYGRKVSWGVEVGGERILFTHIAVPVMTRLKQPERQVLDTLVDAGVARSRSDALAWSVKLVGEHTEEWLAKLRTAMSAVDDLRAQGPDLPA</sequence>
<gene>
    <name type="ordered locus">Rv1265</name>
    <name type="ORF">MTCY50.17c</name>
</gene>
<feature type="chain" id="PRO_0000103780" description="Uncharacterized protein Rv1265">
    <location>
        <begin position="1"/>
        <end position="226"/>
    </location>
</feature>
<organism>
    <name type="scientific">Mycobacterium tuberculosis (strain ATCC 25618 / H37Rv)</name>
    <dbReference type="NCBI Taxonomy" id="83332"/>
    <lineage>
        <taxon>Bacteria</taxon>
        <taxon>Bacillati</taxon>
        <taxon>Actinomycetota</taxon>
        <taxon>Actinomycetes</taxon>
        <taxon>Mycobacteriales</taxon>
        <taxon>Mycobacteriaceae</taxon>
        <taxon>Mycobacterium</taxon>
        <taxon>Mycobacterium tuberculosis complex</taxon>
    </lineage>
</organism>
<reference key="1">
    <citation type="journal article" date="1998" name="Nature">
        <title>Deciphering the biology of Mycobacterium tuberculosis from the complete genome sequence.</title>
        <authorList>
            <person name="Cole S.T."/>
            <person name="Brosch R."/>
            <person name="Parkhill J."/>
            <person name="Garnier T."/>
            <person name="Churcher C.M."/>
            <person name="Harris D.E."/>
            <person name="Gordon S.V."/>
            <person name="Eiglmeier K."/>
            <person name="Gas S."/>
            <person name="Barry C.E. III"/>
            <person name="Tekaia F."/>
            <person name="Badcock K."/>
            <person name="Basham D."/>
            <person name="Brown D."/>
            <person name="Chillingworth T."/>
            <person name="Connor R."/>
            <person name="Davies R.M."/>
            <person name="Devlin K."/>
            <person name="Feltwell T."/>
            <person name="Gentles S."/>
            <person name="Hamlin N."/>
            <person name="Holroyd S."/>
            <person name="Hornsby T."/>
            <person name="Jagels K."/>
            <person name="Krogh A."/>
            <person name="McLean J."/>
            <person name="Moule S."/>
            <person name="Murphy L.D."/>
            <person name="Oliver S."/>
            <person name="Osborne J."/>
            <person name="Quail M.A."/>
            <person name="Rajandream M.A."/>
            <person name="Rogers J."/>
            <person name="Rutter S."/>
            <person name="Seeger K."/>
            <person name="Skelton S."/>
            <person name="Squares S."/>
            <person name="Squares R."/>
            <person name="Sulston J.E."/>
            <person name="Taylor K."/>
            <person name="Whitehead S."/>
            <person name="Barrell B.G."/>
        </authorList>
    </citation>
    <scope>NUCLEOTIDE SEQUENCE [LARGE SCALE GENOMIC DNA]</scope>
    <source>
        <strain>ATCC 25618 / H37Rv</strain>
    </source>
</reference>
<reference key="2">
    <citation type="journal article" date="2011" name="Mol. Cell. Proteomics">
        <title>Proteogenomic analysis of Mycobacterium tuberculosis by high resolution mass spectrometry.</title>
        <authorList>
            <person name="Kelkar D.S."/>
            <person name="Kumar D."/>
            <person name="Kumar P."/>
            <person name="Balakrishnan L."/>
            <person name="Muthusamy B."/>
            <person name="Yadav A.K."/>
            <person name="Shrivastava P."/>
            <person name="Marimuthu A."/>
            <person name="Anand S."/>
            <person name="Sundaram H."/>
            <person name="Kingsbury R."/>
            <person name="Harsha H.C."/>
            <person name="Nair B."/>
            <person name="Prasad T.S."/>
            <person name="Chauhan D.S."/>
            <person name="Katoch K."/>
            <person name="Katoch V.M."/>
            <person name="Kumar P."/>
            <person name="Chaerkady R."/>
            <person name="Ramachandran S."/>
            <person name="Dash D."/>
            <person name="Pandey A."/>
        </authorList>
    </citation>
    <scope>IDENTIFICATION BY MASS SPECTROMETRY [LARGE SCALE ANALYSIS]</scope>
    <source>
        <strain>ATCC 25618 / H37Rv</strain>
    </source>
</reference>